<reference key="1">
    <citation type="journal article" date="1992" name="Proc. Natl. Acad. Sci. U.S.A.">
        <title>Classification of fungal chitin synthases.</title>
        <authorList>
            <person name="Bowen A.R."/>
            <person name="Chen-Wu J.L.-P."/>
            <person name="Momany M."/>
            <person name="Young R."/>
            <person name="Szaniszlo P.J."/>
            <person name="Robbins P.W."/>
        </authorList>
    </citation>
    <scope>NUCLEOTIDE SEQUENCE [GENOMIC DNA]</scope>
</reference>
<organism>
    <name type="scientific">Ajellomyces capsulatus</name>
    <name type="common">Darling's disease fungus</name>
    <name type="synonym">Histoplasma capsulatum</name>
    <dbReference type="NCBI Taxonomy" id="5037"/>
    <lineage>
        <taxon>Eukaryota</taxon>
        <taxon>Fungi</taxon>
        <taxon>Dikarya</taxon>
        <taxon>Ascomycota</taxon>
        <taxon>Pezizomycotina</taxon>
        <taxon>Eurotiomycetes</taxon>
        <taxon>Eurotiomycetidae</taxon>
        <taxon>Onygenales</taxon>
        <taxon>Ajellomycetaceae</taxon>
        <taxon>Histoplasma</taxon>
    </lineage>
</organism>
<protein>
    <recommendedName>
        <fullName>Chitin synthase 1</fullName>
        <ecNumber>2.4.1.16</ecNumber>
    </recommendedName>
    <alternativeName>
        <fullName>Chitin-UDP acetyl-glucosaminyl transferase 1</fullName>
    </alternativeName>
    <alternativeName>
        <fullName>Class-I chitin synthase 1</fullName>
    </alternativeName>
</protein>
<proteinExistence type="inferred from homology"/>
<name>CHS1_AJECA</name>
<gene>
    <name type="primary">CHS1</name>
</gene>
<accession>P30576</accession>
<dbReference type="EC" id="2.4.1.16"/>
<dbReference type="EMBL" id="M82947">
    <property type="protein sequence ID" value="AAA33380.1"/>
    <property type="molecule type" value="Genomic_DNA"/>
</dbReference>
<dbReference type="PIR" id="D38192">
    <property type="entry name" value="D38192"/>
</dbReference>
<dbReference type="CAZy" id="GT2">
    <property type="family name" value="Glycosyltransferase Family 2"/>
</dbReference>
<dbReference type="GO" id="GO:0030428">
    <property type="term" value="C:cell septum"/>
    <property type="evidence" value="ECO:0007669"/>
    <property type="project" value="TreeGrafter"/>
</dbReference>
<dbReference type="GO" id="GO:0005886">
    <property type="term" value="C:plasma membrane"/>
    <property type="evidence" value="ECO:0007669"/>
    <property type="project" value="UniProtKB-SubCell"/>
</dbReference>
<dbReference type="GO" id="GO:0004100">
    <property type="term" value="F:chitin synthase activity"/>
    <property type="evidence" value="ECO:0007669"/>
    <property type="project" value="UniProtKB-EC"/>
</dbReference>
<dbReference type="GO" id="GO:0071555">
    <property type="term" value="P:cell wall organization"/>
    <property type="evidence" value="ECO:0007669"/>
    <property type="project" value="UniProtKB-KW"/>
</dbReference>
<dbReference type="GO" id="GO:0006031">
    <property type="term" value="P:chitin biosynthetic process"/>
    <property type="evidence" value="ECO:0007669"/>
    <property type="project" value="InterPro"/>
</dbReference>
<dbReference type="InterPro" id="IPR004835">
    <property type="entry name" value="Chitin_synth"/>
</dbReference>
<dbReference type="InterPro" id="IPR004834">
    <property type="entry name" value="Chitin_synth_fun"/>
</dbReference>
<dbReference type="PANTHER" id="PTHR22914">
    <property type="entry name" value="CHITIN SYNTHASE"/>
    <property type="match status" value="1"/>
</dbReference>
<dbReference type="PANTHER" id="PTHR22914:SF9">
    <property type="entry name" value="CHITIN SYNTHASE 1"/>
    <property type="match status" value="1"/>
</dbReference>
<dbReference type="Pfam" id="PF01644">
    <property type="entry name" value="Chitin_synth_1"/>
    <property type="match status" value="1"/>
</dbReference>
<feature type="chain" id="PRO_0000193674" description="Chitin synthase 1">
    <location>
        <begin position="1" status="less than"/>
        <end position="189" status="greater than"/>
    </location>
</feature>
<feature type="non-terminal residue">
    <location>
        <position position="1"/>
    </location>
</feature>
<feature type="non-terminal residue">
    <location>
        <position position="189"/>
    </location>
</feature>
<keyword id="KW-1003">Cell membrane</keyword>
<keyword id="KW-0961">Cell wall biogenesis/degradation</keyword>
<keyword id="KW-0328">Glycosyltransferase</keyword>
<keyword id="KW-0472">Membrane</keyword>
<keyword id="KW-0808">Transferase</keyword>
<keyword id="KW-0812">Transmembrane</keyword>
<comment type="function">
    <text evidence="1">Polymerizes chitin, a structural polymer of the cell wall and septum, by transferring the sugar moiety of UDP-GlcNAc to the non-reducing end of the growing chitin polymer.</text>
</comment>
<comment type="catalytic activity">
    <reaction>
        <text>[(1-&gt;4)-N-acetyl-beta-D-glucosaminyl](n) + UDP-N-acetyl-alpha-D-glucosamine = [(1-&gt;4)-N-acetyl-beta-D-glucosaminyl](n+1) + UDP + H(+)</text>
        <dbReference type="Rhea" id="RHEA:16637"/>
        <dbReference type="Rhea" id="RHEA-COMP:9593"/>
        <dbReference type="Rhea" id="RHEA-COMP:9595"/>
        <dbReference type="ChEBI" id="CHEBI:15378"/>
        <dbReference type="ChEBI" id="CHEBI:17029"/>
        <dbReference type="ChEBI" id="CHEBI:57705"/>
        <dbReference type="ChEBI" id="CHEBI:58223"/>
        <dbReference type="EC" id="2.4.1.16"/>
    </reaction>
</comment>
<comment type="subcellular location">
    <subcellularLocation>
        <location evidence="1">Cell membrane</location>
        <topology evidence="1">Multi-pass membrane protein</topology>
    </subcellularLocation>
</comment>
<comment type="similarity">
    <text evidence="1">Belongs to the chitin synthase family. Class I subfamily.</text>
</comment>
<sequence length="189" mass="21252">DFLFARTMIGVFKNIEYMCSRTNSKTWGKEAWKKIVVCVVSDGRAKINPRTRAVLAGLGVYQDGIAKQQVNGKDVTAHIYEYTTQIGMELKGNQVHLKPRSGVPVQMIFCLKEKNQKKINSHRWFFQAFGRVLDPNICVLLDAGTKPGRDSIYHLWRAFDLQPMCGGACGEIKAMLSHGKKLINPLIXA</sequence>
<evidence type="ECO:0000305" key="1"/>